<keyword id="KW-0067">ATP-binding</keyword>
<keyword id="KW-0170">Cobalt</keyword>
<keyword id="KW-0963">Cytoplasm</keyword>
<keyword id="KW-0460">Magnesium</keyword>
<keyword id="KW-0479">Metal-binding</keyword>
<keyword id="KW-0547">Nucleotide-binding</keyword>
<keyword id="KW-0554">One-carbon metabolism</keyword>
<keyword id="KW-0630">Potassium</keyword>
<keyword id="KW-0808">Transferase</keyword>
<sequence>MAAAVDTFLFTSESVNEGHPDKLCDQISDAVLDACLAQDPESKVACETCTKTNLVMVFGEITTKANVDYEKIVRQTCRDIGFVSADVGLDADNCKVLVNIEQQSPDIAQGVHGHLTRRPEEIGAGDQGHMFGYATDETPELMPLSHVLATKLGARLTEVRKNGTCPWLRPDGKTQVTVEYYNENGAMVPIRVHTVLISTQHDETVTNDEIAADLKEHVIKPVIPEKYLDEKTIFHLNPSGRFVIGGPHGDAGLTGRKIIIDTYGGWGAHGGGAFSGKDPTKVDRSGAYIARQAAKSIVAAGLARRCIVQISYAIGVPEPLSVFVDTYGTGKIPDKEILKIVKESFDFRPGMIAINLDLLKGGSRYLKTAAYGHFGRDDADFTWETVKPLKWEKPQA</sequence>
<gene>
    <name type="primary">SAMS3</name>
</gene>
<gene>
    <name type="primary">SAMS5</name>
</gene>
<comment type="function">
    <text evidence="5 8">Catalyzes the formation of S-adenosylmethionine from methionine and ATP. The reaction comprises two steps that are both catalyzed by the same enzyme: formation of S-adenosylmethionine (AdoMet) and triphosphate, and subsequent hydrolysis of the triphosphate (By similarity). May be involved in the synthesis of betain in response to abiotic stress such as high salinity (PubMed:15695433).</text>
</comment>
<comment type="catalytic activity">
    <reaction evidence="5">
        <text>L-methionine + ATP + H2O = S-adenosyl-L-methionine + phosphate + diphosphate</text>
        <dbReference type="Rhea" id="RHEA:21080"/>
        <dbReference type="ChEBI" id="CHEBI:15377"/>
        <dbReference type="ChEBI" id="CHEBI:30616"/>
        <dbReference type="ChEBI" id="CHEBI:33019"/>
        <dbReference type="ChEBI" id="CHEBI:43474"/>
        <dbReference type="ChEBI" id="CHEBI:57844"/>
        <dbReference type="ChEBI" id="CHEBI:59789"/>
        <dbReference type="EC" id="2.5.1.6"/>
    </reaction>
</comment>
<comment type="cofactor">
    <cofactor evidence="5">
        <name>Mn(2+)</name>
        <dbReference type="ChEBI" id="CHEBI:29035"/>
    </cofactor>
    <cofactor evidence="5">
        <name>Mg(2+)</name>
        <dbReference type="ChEBI" id="CHEBI:18420"/>
    </cofactor>
    <cofactor evidence="5">
        <name>Co(2+)</name>
        <dbReference type="ChEBI" id="CHEBI:48828"/>
    </cofactor>
    <text evidence="3 5">Binds 2 divalent ions per subunit. The metal ions interact primarily with the substrate (By similarity). Can utilize magnesium, manganese or cobalt (in vitro) (By similarity).</text>
</comment>
<comment type="cofactor">
    <cofactor evidence="5">
        <name>K(+)</name>
        <dbReference type="ChEBI" id="CHEBI:29103"/>
    </cofactor>
    <text evidence="3">Binds 1 potassium ion per subunit. The potassium ion interacts primarily with the substrate (By similarity).</text>
</comment>
<comment type="pathway">
    <text evidence="5">Amino-acid biosynthesis; S-adenosyl-L-methionine biosynthesis; S-adenosyl-L-methionine from L-methionine: step 1/1.</text>
</comment>
<comment type="subunit">
    <text evidence="1">Homotetramer.</text>
</comment>
<comment type="subcellular location">
    <subcellularLocation>
        <location evidence="1">Cytoplasm</location>
    </subcellularLocation>
</comment>
<comment type="tissue specificity">
    <text evidence="6">Expressed in roots, stems and leaves (at protein level).</text>
</comment>
<comment type="induction">
    <text evidence="6">By salt stress, in stems and leaves (at protein level). Follow a circadian regulation with higher levels in the light.</text>
</comment>
<comment type="similarity">
    <text evidence="7">Belongs to the AdoMet synthase family.</text>
</comment>
<evidence type="ECO:0000250" key="1"/>
<evidence type="ECO:0000250" key="2">
    <source>
        <dbReference type="UniProtKB" id="P0A817"/>
    </source>
</evidence>
<evidence type="ECO:0000250" key="3">
    <source>
        <dbReference type="UniProtKB" id="P13444"/>
    </source>
</evidence>
<evidence type="ECO:0000250" key="4">
    <source>
        <dbReference type="UniProtKB" id="Q00266"/>
    </source>
</evidence>
<evidence type="ECO:0000250" key="5">
    <source>
        <dbReference type="UniProtKB" id="Q96551"/>
    </source>
</evidence>
<evidence type="ECO:0000269" key="6">
    <source>
    </source>
</evidence>
<evidence type="ECO:0000305" key="7"/>
<evidence type="ECO:0000305" key="8">
    <source>
    </source>
</evidence>
<accession>Q6F3F0</accession>
<name>METK3_ATRNU</name>
<reference key="1">
    <citation type="journal article" date="2005" name="Plant Cell Physiol.">
        <title>Similar regulation patterns of choline monooxygenase, phosphoethanolamine N-methyltransferase and S-adenosyl-L-methionine synthetase in leaves of the halophyte Atriplex nummularia L.</title>
        <authorList>
            <person name="Tabuchi T."/>
            <person name="Kawaguchi Y."/>
            <person name="Azuma T."/>
            <person name="Nanmori T."/>
            <person name="Yasuda T."/>
        </authorList>
    </citation>
    <scope>NUCLEOTIDE SEQUENCE [MRNA]</scope>
    <scope>FUNCTION</scope>
    <scope>TISSUE SPECIFICITY</scope>
    <scope>INDUCTION</scope>
    <source>
        <tissue>Shoot</tissue>
    </source>
</reference>
<feature type="chain" id="PRO_0000363007" description="S-adenosylmethionine synthase 3">
    <location>
        <begin position="1"/>
        <end position="396"/>
    </location>
</feature>
<feature type="binding site" evidence="3">
    <location>
        <position position="13"/>
    </location>
    <ligand>
        <name>Mg(2+)</name>
        <dbReference type="ChEBI" id="CHEBI:18420"/>
    </ligand>
</feature>
<feature type="binding site" description="in other chain" evidence="4">
    <location>
        <position position="19"/>
    </location>
    <ligand>
        <name>ATP</name>
        <dbReference type="ChEBI" id="CHEBI:30616"/>
        <note>ligand shared between two neighboring subunits</note>
    </ligand>
</feature>
<feature type="binding site" evidence="2">
    <location>
        <position position="47"/>
    </location>
    <ligand>
        <name>K(+)</name>
        <dbReference type="ChEBI" id="CHEBI:29103"/>
    </ligand>
</feature>
<feature type="binding site" description="in other chain" evidence="2">
    <location>
        <position position="60"/>
    </location>
    <ligand>
        <name>L-methionine</name>
        <dbReference type="ChEBI" id="CHEBI:57844"/>
        <note>ligand shared between two neighboring subunits</note>
    </ligand>
</feature>
<feature type="binding site" description="in other chain" evidence="2">
    <location>
        <position position="103"/>
    </location>
    <ligand>
        <name>L-methionine</name>
        <dbReference type="ChEBI" id="CHEBI:57844"/>
        <note>ligand shared between two neighboring subunits</note>
    </ligand>
</feature>
<feature type="binding site" description="in other chain" evidence="4">
    <location>
        <begin position="171"/>
        <end position="173"/>
    </location>
    <ligand>
        <name>ATP</name>
        <dbReference type="ChEBI" id="CHEBI:30616"/>
        <note>ligand shared between two neighboring subunits</note>
    </ligand>
</feature>
<feature type="binding site" description="in other chain" evidence="4">
    <location>
        <begin position="239"/>
        <end position="242"/>
    </location>
    <ligand>
        <name>ATP</name>
        <dbReference type="ChEBI" id="CHEBI:30616"/>
        <note>ligand shared between two neighboring subunits</note>
    </ligand>
</feature>
<feature type="binding site" description="in other chain" evidence="4">
    <location>
        <position position="250"/>
    </location>
    <ligand>
        <name>ATP</name>
        <dbReference type="ChEBI" id="CHEBI:30616"/>
        <note>ligand shared between two neighboring subunits</note>
    </ligand>
</feature>
<feature type="binding site" evidence="2">
    <location>
        <position position="250"/>
    </location>
    <ligand>
        <name>L-methionine</name>
        <dbReference type="ChEBI" id="CHEBI:57844"/>
        <note>ligand shared between two neighboring subunits</note>
    </ligand>
</feature>
<feature type="binding site" description="in other chain" evidence="2">
    <location>
        <begin position="256"/>
        <end position="257"/>
    </location>
    <ligand>
        <name>ATP</name>
        <dbReference type="ChEBI" id="CHEBI:30616"/>
        <note>ligand shared between two neighboring subunits</note>
    </ligand>
</feature>
<feature type="binding site" evidence="2">
    <location>
        <position position="273"/>
    </location>
    <ligand>
        <name>ATP</name>
        <dbReference type="ChEBI" id="CHEBI:30616"/>
        <note>ligand shared between two neighboring subunits</note>
    </ligand>
</feature>
<feature type="binding site" evidence="2">
    <location>
        <position position="277"/>
    </location>
    <ligand>
        <name>ATP</name>
        <dbReference type="ChEBI" id="CHEBI:30616"/>
        <note>ligand shared between two neighboring subunits</note>
    </ligand>
</feature>
<feature type="binding site" evidence="3">
    <location>
        <position position="281"/>
    </location>
    <ligand>
        <name>ATP</name>
        <dbReference type="ChEBI" id="CHEBI:30616"/>
        <note>ligand shared between two neighboring subunits</note>
    </ligand>
</feature>
<feature type="binding site" description="in other chain" evidence="2">
    <location>
        <position position="281"/>
    </location>
    <ligand>
        <name>L-methionine</name>
        <dbReference type="ChEBI" id="CHEBI:57844"/>
        <note>ligand shared between two neighboring subunits</note>
    </ligand>
</feature>
<dbReference type="EC" id="2.5.1.6" evidence="5"/>
<dbReference type="EMBL" id="AB183563">
    <property type="protein sequence ID" value="BAD29709.1"/>
    <property type="molecule type" value="mRNA"/>
</dbReference>
<dbReference type="EMBL" id="AB183565">
    <property type="protein sequence ID" value="BAD29711.1"/>
    <property type="molecule type" value="mRNA"/>
</dbReference>
<dbReference type="SMR" id="Q6F3F0"/>
<dbReference type="BRENDA" id="2.5.1.6">
    <property type="organism ID" value="7740"/>
</dbReference>
<dbReference type="UniPathway" id="UPA00315">
    <property type="reaction ID" value="UER00080"/>
</dbReference>
<dbReference type="GO" id="GO:0005737">
    <property type="term" value="C:cytoplasm"/>
    <property type="evidence" value="ECO:0007669"/>
    <property type="project" value="UniProtKB-SubCell"/>
</dbReference>
<dbReference type="GO" id="GO:0005524">
    <property type="term" value="F:ATP binding"/>
    <property type="evidence" value="ECO:0007669"/>
    <property type="project" value="UniProtKB-KW"/>
</dbReference>
<dbReference type="GO" id="GO:0046872">
    <property type="term" value="F:metal ion binding"/>
    <property type="evidence" value="ECO:0007669"/>
    <property type="project" value="UniProtKB-KW"/>
</dbReference>
<dbReference type="GO" id="GO:0004478">
    <property type="term" value="F:methionine adenosyltransferase activity"/>
    <property type="evidence" value="ECO:0007669"/>
    <property type="project" value="UniProtKB-EC"/>
</dbReference>
<dbReference type="GO" id="GO:0006730">
    <property type="term" value="P:one-carbon metabolic process"/>
    <property type="evidence" value="ECO:0007669"/>
    <property type="project" value="UniProtKB-KW"/>
</dbReference>
<dbReference type="GO" id="GO:0006556">
    <property type="term" value="P:S-adenosylmethionine biosynthetic process"/>
    <property type="evidence" value="ECO:0007669"/>
    <property type="project" value="UniProtKB-UniPathway"/>
</dbReference>
<dbReference type="CDD" id="cd18079">
    <property type="entry name" value="S-AdoMet_synt"/>
    <property type="match status" value="1"/>
</dbReference>
<dbReference type="FunFam" id="3.30.300.10:FF:000001">
    <property type="entry name" value="S-adenosylmethionine synthase"/>
    <property type="match status" value="1"/>
</dbReference>
<dbReference type="FunFam" id="3.30.300.10:FF:000003">
    <property type="entry name" value="S-adenosylmethionine synthase"/>
    <property type="match status" value="1"/>
</dbReference>
<dbReference type="FunFam" id="3.30.300.10:FF:000004">
    <property type="entry name" value="S-adenosylmethionine synthase"/>
    <property type="match status" value="1"/>
</dbReference>
<dbReference type="Gene3D" id="3.30.300.10">
    <property type="match status" value="3"/>
</dbReference>
<dbReference type="HAMAP" id="MF_00086">
    <property type="entry name" value="S_AdoMet_synth1"/>
    <property type="match status" value="1"/>
</dbReference>
<dbReference type="InterPro" id="IPR022631">
    <property type="entry name" value="ADOMET_SYNTHASE_CS"/>
</dbReference>
<dbReference type="InterPro" id="IPR022630">
    <property type="entry name" value="S-AdoMet_synt_C"/>
</dbReference>
<dbReference type="InterPro" id="IPR022629">
    <property type="entry name" value="S-AdoMet_synt_central"/>
</dbReference>
<dbReference type="InterPro" id="IPR022628">
    <property type="entry name" value="S-AdoMet_synt_N"/>
</dbReference>
<dbReference type="InterPro" id="IPR002133">
    <property type="entry name" value="S-AdoMet_synthetase"/>
</dbReference>
<dbReference type="InterPro" id="IPR022636">
    <property type="entry name" value="S-AdoMet_synthetase_sfam"/>
</dbReference>
<dbReference type="NCBIfam" id="TIGR01034">
    <property type="entry name" value="metK"/>
    <property type="match status" value="1"/>
</dbReference>
<dbReference type="PANTHER" id="PTHR11964">
    <property type="entry name" value="S-ADENOSYLMETHIONINE SYNTHETASE"/>
    <property type="match status" value="1"/>
</dbReference>
<dbReference type="Pfam" id="PF02773">
    <property type="entry name" value="S-AdoMet_synt_C"/>
    <property type="match status" value="1"/>
</dbReference>
<dbReference type="Pfam" id="PF02772">
    <property type="entry name" value="S-AdoMet_synt_M"/>
    <property type="match status" value="1"/>
</dbReference>
<dbReference type="Pfam" id="PF00438">
    <property type="entry name" value="S-AdoMet_synt_N"/>
    <property type="match status" value="1"/>
</dbReference>
<dbReference type="PIRSF" id="PIRSF000497">
    <property type="entry name" value="MAT"/>
    <property type="match status" value="1"/>
</dbReference>
<dbReference type="SUPFAM" id="SSF55973">
    <property type="entry name" value="S-adenosylmethionine synthetase"/>
    <property type="match status" value="3"/>
</dbReference>
<dbReference type="PROSITE" id="PS00376">
    <property type="entry name" value="ADOMET_SYNTHASE_1"/>
    <property type="match status" value="1"/>
</dbReference>
<dbReference type="PROSITE" id="PS00377">
    <property type="entry name" value="ADOMET_SYNTHASE_2"/>
    <property type="match status" value="1"/>
</dbReference>
<protein>
    <recommendedName>
        <fullName>S-adenosylmethionine synthase 3</fullName>
        <shortName>AdoMet synthase 3</shortName>
        <ecNumber evidence="5">2.5.1.6</ecNumber>
    </recommendedName>
    <alternativeName>
        <fullName>Methionine adenosyltransferase 3</fullName>
        <shortName>MAT 3</shortName>
    </alternativeName>
</protein>
<proteinExistence type="evidence at protein level"/>
<organism>
    <name type="scientific">Atriplex nummularia</name>
    <name type="common">Old man saltbush</name>
    <name type="synonym">Atriplex johnstonii</name>
    <dbReference type="NCBI Taxonomy" id="3553"/>
    <lineage>
        <taxon>Eukaryota</taxon>
        <taxon>Viridiplantae</taxon>
        <taxon>Streptophyta</taxon>
        <taxon>Embryophyta</taxon>
        <taxon>Tracheophyta</taxon>
        <taxon>Spermatophyta</taxon>
        <taxon>Magnoliopsida</taxon>
        <taxon>eudicotyledons</taxon>
        <taxon>Gunneridae</taxon>
        <taxon>Pentapetalae</taxon>
        <taxon>Caryophyllales</taxon>
        <taxon>Chenopodiaceae</taxon>
        <taxon>Chenopodioideae</taxon>
        <taxon>Atripliceae</taxon>
        <taxon>Atriplex</taxon>
    </lineage>
</organism>